<proteinExistence type="evidence at transcript level"/>
<reference key="1">
    <citation type="submission" date="2003-12" db="EMBL/GenBank/DDBJ databases">
        <authorList>
            <consortium name="NIH - Xenopus Gene Collection (XGC) project"/>
        </authorList>
    </citation>
    <scope>NUCLEOTIDE SEQUENCE [LARGE SCALE MRNA]</scope>
    <source>
        <tissue>Embryo</tissue>
    </source>
</reference>
<evidence type="ECO:0000250" key="1"/>
<evidence type="ECO:0000255" key="2"/>
<evidence type="ECO:0000305" key="3"/>
<sequence>MAARRDQVIHLLRQLQRASCKCPAHSHTYSQAPVTGRKTEYAFEMAVSNIRYGENVTQEIGMDLQNLGARNVCVMTDRNLVELSPVKAVLNSLVKNNVSFKLYDRVRVEPTDKSFMDAIEFAKKGQFDAYVGVGGGSVIDTCKAANLYSSSPGADFLDYVNPPIGKGKAVTVPLKPLIAVPTTSGTGSETTGIAIFDYEELKAKTGIASRAIKPTLGLIDPVHTLSMPERVVANSGFDVLCHSLESYTALPYNMRSPCPTNPINRPAYQGSNPISDVWAKHALRIVAKYLKRAVRNPDDREARFAMHLASSFAGVGFGNAGVHLCHGMSYPIAGHVKTYRAKDYEVDHPLVPHGLSVVLTSPAVFSFTALMCPERHLEAAEILGADIRTAKIKEAGLILADTLRKFLYDLNVDDGLAAVGYTTEDIPALVKGTLPQERVTKLSPRAHSEEELAGLFEASMKLY</sequence>
<protein>
    <recommendedName>
        <fullName>Hydroxyacid-oxoacid transhydrogenase, mitochondrial</fullName>
        <shortName>HOT</shortName>
        <ecNumber>1.1.99.24</ecNumber>
    </recommendedName>
    <alternativeName>
        <fullName>Alcohol dehydrogenase iron-containing protein 1</fullName>
        <shortName>ADHFe1</shortName>
    </alternativeName>
</protein>
<name>HOT_XENTR</name>
<keyword id="KW-0443">Lipid metabolism</keyword>
<keyword id="KW-0496">Mitochondrion</keyword>
<keyword id="KW-0560">Oxidoreductase</keyword>
<keyword id="KW-1185">Reference proteome</keyword>
<keyword id="KW-0809">Transit peptide</keyword>
<organism>
    <name type="scientific">Xenopus tropicalis</name>
    <name type="common">Western clawed frog</name>
    <name type="synonym">Silurana tropicalis</name>
    <dbReference type="NCBI Taxonomy" id="8364"/>
    <lineage>
        <taxon>Eukaryota</taxon>
        <taxon>Metazoa</taxon>
        <taxon>Chordata</taxon>
        <taxon>Craniata</taxon>
        <taxon>Vertebrata</taxon>
        <taxon>Euteleostomi</taxon>
        <taxon>Amphibia</taxon>
        <taxon>Batrachia</taxon>
        <taxon>Anura</taxon>
        <taxon>Pipoidea</taxon>
        <taxon>Pipidae</taxon>
        <taxon>Xenopodinae</taxon>
        <taxon>Xenopus</taxon>
        <taxon>Silurana</taxon>
    </lineage>
</organism>
<dbReference type="EC" id="1.1.99.24"/>
<dbReference type="EMBL" id="BC064162">
    <property type="protein sequence ID" value="AAH64162.1"/>
    <property type="molecule type" value="mRNA"/>
</dbReference>
<dbReference type="RefSeq" id="NP_989277.1">
    <property type="nucleotide sequence ID" value="NM_203946.1"/>
</dbReference>
<dbReference type="RefSeq" id="XP_012819920.2">
    <property type="nucleotide sequence ID" value="XM_012964466.3"/>
</dbReference>
<dbReference type="RefSeq" id="XP_031759160.1">
    <property type="nucleotide sequence ID" value="XM_031903300.1"/>
</dbReference>
<dbReference type="SMR" id="Q6P371"/>
<dbReference type="FunCoup" id="Q6P371">
    <property type="interactions" value="558"/>
</dbReference>
<dbReference type="STRING" id="8364.ENSXETP00000052977"/>
<dbReference type="PaxDb" id="8364-ENSXETP00000063497"/>
<dbReference type="DNASU" id="394891"/>
<dbReference type="GeneID" id="394891"/>
<dbReference type="KEGG" id="xtr:394891"/>
<dbReference type="AGR" id="Xenbase:XB-GENE-966429"/>
<dbReference type="CTD" id="137872"/>
<dbReference type="Xenbase" id="XB-GENE-966429">
    <property type="gene designation" value="adhfe1"/>
</dbReference>
<dbReference type="eggNOG" id="KOG3857">
    <property type="taxonomic scope" value="Eukaryota"/>
</dbReference>
<dbReference type="InParanoid" id="Q6P371"/>
<dbReference type="OMA" id="NLMGAGC"/>
<dbReference type="OrthoDB" id="339764at2759"/>
<dbReference type="Reactome" id="R-XTR-880009">
    <property type="pathway name" value="Interconversion of 2-oxoglutarate and 2-hydroxyglutarate"/>
</dbReference>
<dbReference type="Proteomes" id="UP000008143">
    <property type="component" value="Chromosome 6"/>
</dbReference>
<dbReference type="GO" id="GO:0005739">
    <property type="term" value="C:mitochondrion"/>
    <property type="evidence" value="ECO:0000250"/>
    <property type="project" value="UniProtKB"/>
</dbReference>
<dbReference type="GO" id="GO:0004022">
    <property type="term" value="F:alcohol dehydrogenase (NAD+) activity"/>
    <property type="evidence" value="ECO:0007669"/>
    <property type="project" value="InterPro"/>
</dbReference>
<dbReference type="GO" id="GO:0047988">
    <property type="term" value="F:hydroxyacid-oxoacid transhydrogenase activity"/>
    <property type="evidence" value="ECO:0000250"/>
    <property type="project" value="UniProtKB"/>
</dbReference>
<dbReference type="GO" id="GO:0046872">
    <property type="term" value="F:metal ion binding"/>
    <property type="evidence" value="ECO:0007669"/>
    <property type="project" value="InterPro"/>
</dbReference>
<dbReference type="GO" id="GO:0019552">
    <property type="term" value="P:glutamate catabolic process via 2-hydroxyglutarate"/>
    <property type="evidence" value="ECO:0000250"/>
    <property type="project" value="UniProtKB"/>
</dbReference>
<dbReference type="GO" id="GO:0006629">
    <property type="term" value="P:lipid metabolic process"/>
    <property type="evidence" value="ECO:0007669"/>
    <property type="project" value="UniProtKB-KW"/>
</dbReference>
<dbReference type="CDD" id="cd08190">
    <property type="entry name" value="HOT"/>
    <property type="match status" value="1"/>
</dbReference>
<dbReference type="FunFam" id="1.20.1090.10:FF:000003">
    <property type="entry name" value="Probable hydroxyacid-oxoacid transhydrogenase, mitochondrial"/>
    <property type="match status" value="1"/>
</dbReference>
<dbReference type="FunFam" id="3.40.50.1970:FF:000010">
    <property type="entry name" value="Probable hydroxyacid-oxoacid transhydrogenase, mitochondrial"/>
    <property type="match status" value="1"/>
</dbReference>
<dbReference type="Gene3D" id="3.40.50.1970">
    <property type="match status" value="1"/>
</dbReference>
<dbReference type="Gene3D" id="1.20.1090.10">
    <property type="entry name" value="Dehydroquinate synthase-like - alpha domain"/>
    <property type="match status" value="1"/>
</dbReference>
<dbReference type="InterPro" id="IPR001670">
    <property type="entry name" value="ADH_Fe/GldA"/>
</dbReference>
<dbReference type="InterPro" id="IPR056798">
    <property type="entry name" value="ADH_Fe_C"/>
</dbReference>
<dbReference type="InterPro" id="IPR039697">
    <property type="entry name" value="Alcohol_dehydrogenase_Fe"/>
</dbReference>
<dbReference type="InterPro" id="IPR042157">
    <property type="entry name" value="HOT"/>
</dbReference>
<dbReference type="PANTHER" id="PTHR11496">
    <property type="entry name" value="ALCOHOL DEHYDROGENASE"/>
    <property type="match status" value="1"/>
</dbReference>
<dbReference type="PANTHER" id="PTHR11496:SF83">
    <property type="entry name" value="HYDROXYACID-OXOACID TRANSHYDROGENASE, MITOCHONDRIAL"/>
    <property type="match status" value="1"/>
</dbReference>
<dbReference type="Pfam" id="PF25137">
    <property type="entry name" value="ADH_Fe_C"/>
    <property type="match status" value="1"/>
</dbReference>
<dbReference type="Pfam" id="PF00465">
    <property type="entry name" value="Fe-ADH"/>
    <property type="match status" value="1"/>
</dbReference>
<dbReference type="SUPFAM" id="SSF56796">
    <property type="entry name" value="Dehydroquinate synthase-like"/>
    <property type="match status" value="1"/>
</dbReference>
<gene>
    <name type="primary">adhfe1</name>
</gene>
<feature type="transit peptide" description="Mitochondrion" evidence="2">
    <location>
        <begin position="1"/>
        <end status="unknown"/>
    </location>
</feature>
<feature type="chain" id="PRO_0000323001" description="Hydroxyacid-oxoacid transhydrogenase, mitochondrial">
    <location>
        <begin status="unknown"/>
        <end position="463"/>
    </location>
</feature>
<accession>Q6P371</accession>
<comment type="function">
    <text evidence="1">Catalyzes the cofactor-independent reversible oxidation of gamma-hydroxybutyrate (GHB) to succinic semialdehyde (SSA) coupled to reduction of 2-ketoglutarate (2-KG) to D-2-hydroxyglutarate (D-2-HG). L-3-hydroxybutyrate (L-3-OHB) is also a substrate for HOT when using 2-KG as hydrogen acceptor, resulting in the formation of D-2-HG (By similarity).</text>
</comment>
<comment type="catalytic activity">
    <reaction>
        <text>(S)-3-hydroxybutanoate + 2-oxoglutarate = (R)-2-hydroxyglutarate + acetoacetate</text>
        <dbReference type="Rhea" id="RHEA:23048"/>
        <dbReference type="ChEBI" id="CHEBI:11047"/>
        <dbReference type="ChEBI" id="CHEBI:13705"/>
        <dbReference type="ChEBI" id="CHEBI:15801"/>
        <dbReference type="ChEBI" id="CHEBI:16810"/>
        <dbReference type="EC" id="1.1.99.24"/>
    </reaction>
</comment>
<comment type="catalytic activity">
    <reaction>
        <text>4-hydroxybutanoate + 2-oxoglutarate = (R)-2-hydroxyglutarate + succinate semialdehyde</text>
        <dbReference type="Rhea" id="RHEA:24734"/>
        <dbReference type="ChEBI" id="CHEBI:15801"/>
        <dbReference type="ChEBI" id="CHEBI:16724"/>
        <dbReference type="ChEBI" id="CHEBI:16810"/>
        <dbReference type="ChEBI" id="CHEBI:57706"/>
        <dbReference type="EC" id="1.1.99.24"/>
    </reaction>
</comment>
<comment type="subcellular location">
    <subcellularLocation>
        <location evidence="1">Mitochondrion</location>
    </subcellularLocation>
</comment>
<comment type="similarity">
    <text evidence="3">Belongs to the iron-containing alcohol dehydrogenase family. Hydroxyacid-oxoacid transhydrogenase subfamily.</text>
</comment>